<protein>
    <recommendedName>
        <fullName>Serine protease SepA autotransporter</fullName>
        <ecNumber>3.4.21.-</ecNumber>
    </recommendedName>
    <component>
        <recommendedName>
            <fullName>Serine protease SepA</fullName>
        </recommendedName>
    </component>
    <component>
        <recommendedName>
            <fullName>Serine protease SepA translocator</fullName>
        </recommendedName>
    </component>
</protein>
<comment type="function">
    <text evidence="8">Major protein secreted in laboratory media showing proteolytic activity. May be involved in invasion and destruction of host intestinal epithelium.</text>
</comment>
<comment type="activity regulation">
    <text evidence="8">Inhibited by the serine protease inhibitor PMSF, but not by benzamidine, alpha 1-antitrypsin, alpha 1-antichymotrypsin. Not inhibited by metalloprotease inhibitors such as EDTA and orthophenanthroline.</text>
</comment>
<comment type="biophysicochemical properties">
    <temperatureDependence>
        <text>Optimum temperature is 37 degrees Celsius.</text>
    </temperatureDependence>
</comment>
<comment type="subcellular location">
    <molecule>Serine protease SepA autotransporter</molecule>
    <subcellularLocation>
        <location evidence="2">Periplasm</location>
    </subcellularLocation>
</comment>
<comment type="subcellular location">
    <molecule>Serine protease SepA</molecule>
    <subcellularLocation>
        <location>Secreted</location>
    </subcellularLocation>
    <subcellularLocation>
        <location evidence="6">Cell surface</location>
    </subcellularLocation>
    <text evidence="6">Localized as a tightly restricted cap on the old cell pole. Colocalizes with IcsA at the old cell pole, although SepA is more tightly restricted to the cell pole than IcsA.</text>
</comment>
<comment type="subcellular location">
    <molecule>Serine protease SepA translocator</molecule>
    <subcellularLocation>
        <location evidence="2">Cell outer membrane</location>
        <topology evidence="1">Multi-pass membrane protein</topology>
    </subcellularLocation>
    <text evidence="2">The cleaved C-terminal fragment (autotransporter domain) is localized in the outer membrane.</text>
</comment>
<comment type="domain">
    <text evidence="1">The signal peptide, cleaved at the inner membrane, guides the autotransporter protein to the periplasmic space. Then, insertion of the C-terminal translocator domain in the outer membrane forms a hydrophilic pore for the translocation of the passenger domain to the bacterial cell surface, with subsequent cleavage (By similarity).</text>
</comment>
<comment type="PTM">
    <text>Cleaved to release the mature protein from the outer membrane. Cleavage is performed by an unknown protease.</text>
</comment>
<comment type="disruption phenotype">
    <text evidence="8">Mutants exhibit an attenuated virulence in the rabbit ligated ileal loop model.</text>
</comment>
<comment type="miscellaneous">
    <text evidence="6">Secretion across inner membrane is dependent on the SecA and SecYEG apparatus. However, intracellular polar localization precedes secretion and is independent of SecA.</text>
</comment>
<name>SEPA_SHIFL</name>
<organism>
    <name type="scientific">Shigella flexneri</name>
    <dbReference type="NCBI Taxonomy" id="623"/>
    <lineage>
        <taxon>Bacteria</taxon>
        <taxon>Pseudomonadati</taxon>
        <taxon>Pseudomonadota</taxon>
        <taxon>Gammaproteobacteria</taxon>
        <taxon>Enterobacterales</taxon>
        <taxon>Enterobacteriaceae</taxon>
        <taxon>Shigella</taxon>
    </lineage>
</organism>
<dbReference type="EC" id="3.4.21.-"/>
<dbReference type="EMBL" id="Z48219">
    <property type="protein sequence ID" value="CAA88252.1"/>
    <property type="molecule type" value="Genomic_DNA"/>
</dbReference>
<dbReference type="EMBL" id="AL391753">
    <property type="protein sequence ID" value="CAC05786.1"/>
    <property type="molecule type" value="Genomic_DNA"/>
</dbReference>
<dbReference type="EMBL" id="AF348706">
    <property type="protein sequence ID" value="AAK18385.1"/>
    <property type="molecule type" value="Genomic_DNA"/>
</dbReference>
<dbReference type="EMBL" id="AF386526">
    <property type="protein sequence ID" value="AAL72309.1"/>
    <property type="molecule type" value="Genomic_DNA"/>
</dbReference>
<dbReference type="PIR" id="S57664">
    <property type="entry name" value="S57664"/>
</dbReference>
<dbReference type="RefSeq" id="NP_858203.1">
    <property type="nucleotide sequence ID" value="NC_004851.1"/>
</dbReference>
<dbReference type="RefSeq" id="WP_010921633.1">
    <property type="nucleotide sequence ID" value="NZ_QWST01000246.1"/>
</dbReference>
<dbReference type="PDB" id="5J44">
    <property type="method" value="X-ray"/>
    <property type="resolution" value="2.91 A"/>
    <property type="chains" value="A/B=57-1089"/>
</dbReference>
<dbReference type="PDBsum" id="5J44"/>
<dbReference type="SMR" id="Q8VSL2"/>
<dbReference type="MEROPS" id="S06.013"/>
<dbReference type="PaxDb" id="198214-CP0070"/>
<dbReference type="GeneID" id="1238005"/>
<dbReference type="KEGG" id="sfl:CP0070"/>
<dbReference type="PATRIC" id="fig|198214.7.peg.5314"/>
<dbReference type="HOGENOM" id="CLU_000723_0_0_6"/>
<dbReference type="Proteomes" id="UP000001006">
    <property type="component" value="Plasmid pCP301"/>
</dbReference>
<dbReference type="GO" id="GO:0009279">
    <property type="term" value="C:cell outer membrane"/>
    <property type="evidence" value="ECO:0007669"/>
    <property type="project" value="UniProtKB-SubCell"/>
</dbReference>
<dbReference type="GO" id="GO:0009986">
    <property type="term" value="C:cell surface"/>
    <property type="evidence" value="ECO:0007669"/>
    <property type="project" value="UniProtKB-SubCell"/>
</dbReference>
<dbReference type="GO" id="GO:0005576">
    <property type="term" value="C:extracellular region"/>
    <property type="evidence" value="ECO:0007669"/>
    <property type="project" value="UniProtKB-SubCell"/>
</dbReference>
<dbReference type="GO" id="GO:0042597">
    <property type="term" value="C:periplasmic space"/>
    <property type="evidence" value="ECO:0007669"/>
    <property type="project" value="UniProtKB-SubCell"/>
</dbReference>
<dbReference type="GO" id="GO:0004252">
    <property type="term" value="F:serine-type endopeptidase activity"/>
    <property type="evidence" value="ECO:0007669"/>
    <property type="project" value="InterPro"/>
</dbReference>
<dbReference type="GO" id="GO:0006508">
    <property type="term" value="P:proteolysis"/>
    <property type="evidence" value="ECO:0007669"/>
    <property type="project" value="UniProtKB-KW"/>
</dbReference>
<dbReference type="CDD" id="cd01343">
    <property type="entry name" value="PL1_Passenger_AT"/>
    <property type="match status" value="1"/>
</dbReference>
<dbReference type="Gene3D" id="2.160.20.20">
    <property type="match status" value="1"/>
</dbReference>
<dbReference type="Gene3D" id="2.40.10.120">
    <property type="match status" value="1"/>
</dbReference>
<dbReference type="Gene3D" id="2.40.128.130">
    <property type="entry name" value="Autotransporter beta-domain"/>
    <property type="match status" value="1"/>
</dbReference>
<dbReference type="InterPro" id="IPR005546">
    <property type="entry name" value="Autotransporte_beta"/>
</dbReference>
<dbReference type="InterPro" id="IPR036709">
    <property type="entry name" value="Autotransporte_beta_dom_sf"/>
</dbReference>
<dbReference type="InterPro" id="IPR012332">
    <property type="entry name" value="Autotransporter_pectin_lyase_C"/>
</dbReference>
<dbReference type="InterPro" id="IPR050909">
    <property type="entry name" value="Bact_Autotransporter_VF"/>
</dbReference>
<dbReference type="InterPro" id="IPR006315">
    <property type="entry name" value="OM_autotransptr_brl_dom"/>
</dbReference>
<dbReference type="InterPro" id="IPR011050">
    <property type="entry name" value="Pectin_lyase_fold/virulence"/>
</dbReference>
<dbReference type="InterPro" id="IPR009003">
    <property type="entry name" value="Peptidase_S1_PA"/>
</dbReference>
<dbReference type="InterPro" id="IPR000710">
    <property type="entry name" value="Peptidase_S6"/>
</dbReference>
<dbReference type="InterPro" id="IPR030396">
    <property type="entry name" value="Peptidase_S6_dom"/>
</dbReference>
<dbReference type="NCBIfam" id="TIGR01414">
    <property type="entry name" value="autotrans_barl"/>
    <property type="match status" value="1"/>
</dbReference>
<dbReference type="PANTHER" id="PTHR12338">
    <property type="entry name" value="AUTOTRANSPORTER"/>
    <property type="match status" value="1"/>
</dbReference>
<dbReference type="PANTHER" id="PTHR12338:SF8">
    <property type="entry name" value="HEME_HEMOPEXIN-BINDING PROTEIN"/>
    <property type="match status" value="1"/>
</dbReference>
<dbReference type="Pfam" id="PF03797">
    <property type="entry name" value="Autotransporter"/>
    <property type="match status" value="1"/>
</dbReference>
<dbReference type="Pfam" id="PF24078">
    <property type="entry name" value="Beta-sol_PIC_HAP1_IgA0_2nd"/>
    <property type="match status" value="1"/>
</dbReference>
<dbReference type="Pfam" id="PF02395">
    <property type="entry name" value="Peptidase_S6"/>
    <property type="match status" value="1"/>
</dbReference>
<dbReference type="PRINTS" id="PR00921">
    <property type="entry name" value="IGASERPTASE"/>
</dbReference>
<dbReference type="SMART" id="SM00869">
    <property type="entry name" value="Autotransporter"/>
    <property type="match status" value="1"/>
</dbReference>
<dbReference type="SUPFAM" id="SSF103515">
    <property type="entry name" value="Autotransporter"/>
    <property type="match status" value="1"/>
</dbReference>
<dbReference type="SUPFAM" id="SSF51126">
    <property type="entry name" value="Pectin lyase-like"/>
    <property type="match status" value="1"/>
</dbReference>
<dbReference type="SUPFAM" id="SSF50494">
    <property type="entry name" value="Trypsin-like serine proteases"/>
    <property type="match status" value="1"/>
</dbReference>
<dbReference type="PROSITE" id="PS51208">
    <property type="entry name" value="AUTOTRANSPORTER"/>
    <property type="match status" value="1"/>
</dbReference>
<dbReference type="PROSITE" id="PS51691">
    <property type="entry name" value="PEPTIDASE_S6"/>
    <property type="match status" value="1"/>
</dbReference>
<sequence length="1364" mass="146017">MNKIYYLKYCHITKSLIAVSELARRVTCKSHRRLSRRVILTSVAALSLSSAWPALSATVSAEIPYQIFRDFAENKGQFTPGTTNISIYDKQGNLVGKLDKAPMADFSSATITTGSLPPGDHTLYSPQYVVTAKHVSGSDTMSFGYAKNTYTAVGTNNNSGLDIKTRRLSKLVTEVAPAEVSDIGAVSGAYQAGGRFTEFYRLGGGMQYVKDKNGNRTQVYTNGGFLVGGTVSALNSYNNGQMITAQTGDIFNPANGPLANYLNMGDSGSPLFAYDSLQKKWVLIGVLSSGTNYGNNWVVTTQDFLGQQPQNDFDKTIAYTSGEGVLQWKYDAANGTGTLTQGNTTWDMHGKKGNDLNAGKNLLFTGNNGEVVLQNSVNQGAGYLQFAGDYRVSALNGQTWMGGGIITDKGTHVLWQVNGVAGDNLHKTGEGTLTVNGTGVNAGGLKVGDGTVILNQQADADGKVQAFSSVGIASGRPTVVLSDSQQVNPDNISWGYRGGRLELNGNNLTFTRLQAADYGAIITNNSEKKSTVTLDLQTLKASDINVPVNTVSIFGGRGAPGDLYYDSSTKQYFILKASSYSPFFSDLNNSSVWQNVGKDRNKAIDTVKQQKIEASSQPYMYHGQLNGNMDVNIPQLSGKDVLALDGSVNLPEGSITKKSGTLIFQGHPVIHAGTTTSSSQSDWETRQFTLEKLKLDAATFHLSRNGKMQGDINATNGSTVILGSSRVFTDRSDGTGNAVFSVEGSATATTVGDQSDYSGNVTLENKSSLQIMERFTGGIEAYDSTVSVTSQNAVFDRVGSFVNSSLTLGKGAKLTAQSGIFSTGAVDVKENASLTLTGMPSAQKQGYYSPVISTTEGINLEDNASFSVKNMGYLSSDIHAGTTAATINLGDSDADAGKTDSPLFSSLMKGYNAVLRGSITGAQSTVNMINALWYSDGKSEAGALKAKGSRIELGDGKHFATLQVKELSADNTTFLMHTNNSRADQLNVTDKLSGSNNSVLVDFLNKPASEMSVTLITAPKGSDEKTFTAGTQQIGFSNVTPVISTEKTDDATKWVLTGYQTTADAGASKAAKDFMASGYKSFLTEVNNLNKRMGDLRDTQGDAGVWARIMNGTGSADGDYSDNYTHVQIGVDRKHELDGVDLFTGALLTYTDSNASSHAFSGKNKSVGGGLYASALFNSGAYFDLIGKYLHHDNQHTANFASLGTKDYSSHSWYAGAEVGYRYHLTKESWVEPQIELVYGSVSGKAFSWEDRGMALSMKDKDYNPLIGRTGVDVGRAFSGDDWKITARAGLGYQFDLLANGETVLQDASGEKRFEGEKDSRMLMTVGMNAEIKDNMRLGLELEKSAFGKYNVDNAINANFRYVF</sequence>
<gene>
    <name type="primary">sepA</name>
    <name type="ordered locus">CP0070</name>
</gene>
<keyword id="KW-0002">3D-structure</keyword>
<keyword id="KW-0998">Cell outer membrane</keyword>
<keyword id="KW-0903">Direct protein sequencing</keyword>
<keyword id="KW-0378">Hydrolase</keyword>
<keyword id="KW-0472">Membrane</keyword>
<keyword id="KW-0574">Periplasm</keyword>
<keyword id="KW-0614">Plasmid</keyword>
<keyword id="KW-0645">Protease</keyword>
<keyword id="KW-1185">Reference proteome</keyword>
<keyword id="KW-0964">Secreted</keyword>
<keyword id="KW-0720">Serine protease</keyword>
<keyword id="KW-0732">Signal</keyword>
<keyword id="KW-0812">Transmembrane</keyword>
<keyword id="KW-1134">Transmembrane beta strand</keyword>
<keyword id="KW-0843">Virulence</keyword>
<keyword id="KW-0865">Zymogen</keyword>
<feature type="signal peptide" evidence="7">
    <location>
        <begin position="1"/>
        <end position="56"/>
    </location>
</feature>
<feature type="chain" id="PRO_0000387609" description="Serine protease SepA autotransporter">
    <location>
        <begin position="57"/>
        <end position="1364"/>
    </location>
</feature>
<feature type="chain" id="PRO_0000026980" description="Serine protease SepA">
    <location>
        <begin position="57"/>
        <end position="1089"/>
    </location>
</feature>
<feature type="chain" id="PRO_0000026981" description="Serine protease SepA translocator" evidence="3">
    <location>
        <begin position="1090"/>
        <end position="1364"/>
    </location>
</feature>
<feature type="domain" description="Peptidase S6" evidence="5">
    <location>
        <begin position="57"/>
        <end position="307"/>
    </location>
</feature>
<feature type="domain" description="Autotransporter" evidence="4">
    <location>
        <begin position="1098"/>
        <end position="1364"/>
    </location>
</feature>
<feature type="active site" description="Charge relay system" evidence="5">
    <location>
        <position position="134"/>
    </location>
</feature>
<feature type="active site" description="Charge relay system" evidence="5">
    <location>
        <position position="162"/>
    </location>
</feature>
<feature type="active site" description="Charge relay system" evidence="5">
    <location>
        <position position="267"/>
    </location>
</feature>
<feature type="site" description="Cleavage" evidence="3">
    <location>
        <begin position="1089"/>
        <end position="1090"/>
    </location>
</feature>
<feature type="sequence variant" description="In plasmid pWR100 and plasmid pWR501.">
    <original>R</original>
    <variation>H</variation>
    <location>
        <position position="600"/>
    </location>
</feature>
<feature type="sequence variant" description="In plasmid pWR100 and plasmid pWR501.">
    <original>F</original>
    <variation>S</variation>
    <location>
        <position position="740"/>
    </location>
</feature>
<feature type="sequence conflict" description="In Ref. 1; CAA88252." evidence="9" ref="1">
    <original>NPA</original>
    <variation>LIPP</variation>
    <location>
        <begin position="252"/>
        <end position="254"/>
    </location>
</feature>
<feature type="sequence conflict" description="In Ref. 1; CAA88252." evidence="9" ref="1">
    <original>DMHGKKGND</original>
    <variation>GYAWKERKLI</variation>
    <location>
        <begin position="347"/>
        <end position="355"/>
    </location>
</feature>
<feature type="sequence conflict" description="In Ref. 1; CAA88252." evidence="9" ref="1">
    <original>A</original>
    <variation>R</variation>
    <location>
        <position position="460"/>
    </location>
</feature>
<feature type="sequence conflict" description="In Ref. 1; CAA88252." evidence="9" ref="1">
    <original>D</original>
    <variation>A</variation>
    <location>
        <position position="1251"/>
    </location>
</feature>
<feature type="strand" evidence="10">
    <location>
        <begin position="58"/>
        <end position="63"/>
    </location>
</feature>
<feature type="helix" evidence="10">
    <location>
        <begin position="65"/>
        <end position="73"/>
    </location>
</feature>
<feature type="strand" evidence="10">
    <location>
        <begin position="85"/>
        <end position="88"/>
    </location>
</feature>
<feature type="strand" evidence="10">
    <location>
        <begin position="90"/>
        <end position="92"/>
    </location>
</feature>
<feature type="strand" evidence="10">
    <location>
        <begin position="94"/>
        <end position="98"/>
    </location>
</feature>
<feature type="strand" evidence="10">
    <location>
        <begin position="111"/>
        <end position="113"/>
    </location>
</feature>
<feature type="strand" evidence="10">
    <location>
        <begin position="122"/>
        <end position="125"/>
    </location>
</feature>
<feature type="strand" evidence="10">
    <location>
        <begin position="128"/>
        <end position="131"/>
    </location>
</feature>
<feature type="strand" evidence="10">
    <location>
        <begin position="139"/>
        <end position="145"/>
    </location>
</feature>
<feature type="strand" evidence="10">
    <location>
        <begin position="148"/>
        <end position="157"/>
    </location>
</feature>
<feature type="strand" evidence="10">
    <location>
        <begin position="159"/>
        <end position="162"/>
    </location>
</feature>
<feature type="strand" evidence="10">
    <location>
        <begin position="164"/>
        <end position="170"/>
    </location>
</feature>
<feature type="turn" evidence="10">
    <location>
        <begin position="187"/>
        <end position="190"/>
    </location>
</feature>
<feature type="strand" evidence="10">
    <location>
        <begin position="194"/>
        <end position="203"/>
    </location>
</feature>
<feature type="strand" evidence="10">
    <location>
        <begin position="208"/>
        <end position="210"/>
    </location>
</feature>
<feature type="strand" evidence="10">
    <location>
        <begin position="216"/>
        <end position="218"/>
    </location>
</feature>
<feature type="strand" evidence="10">
    <location>
        <begin position="227"/>
        <end position="230"/>
    </location>
</feature>
<feature type="strand" evidence="10">
    <location>
        <begin position="235"/>
        <end position="237"/>
    </location>
</feature>
<feature type="turn" evidence="10">
    <location>
        <begin position="238"/>
        <end position="241"/>
    </location>
</feature>
<feature type="strand" evidence="10">
    <location>
        <begin position="242"/>
        <end position="245"/>
    </location>
</feature>
<feature type="helix" evidence="10">
    <location>
        <begin position="253"/>
        <end position="255"/>
    </location>
</feature>
<feature type="strand" evidence="10">
    <location>
        <begin position="270"/>
        <end position="275"/>
    </location>
</feature>
<feature type="turn" evidence="10">
    <location>
        <begin position="276"/>
        <end position="279"/>
    </location>
</feature>
<feature type="strand" evidence="10">
    <location>
        <begin position="280"/>
        <end position="290"/>
    </location>
</feature>
<feature type="strand" evidence="10">
    <location>
        <begin position="295"/>
        <end position="299"/>
    </location>
</feature>
<feature type="helix" evidence="10">
    <location>
        <begin position="302"/>
        <end position="305"/>
    </location>
</feature>
<feature type="helix" evidence="10">
    <location>
        <begin position="307"/>
        <end position="311"/>
    </location>
</feature>
<feature type="strand" evidence="10">
    <location>
        <begin position="321"/>
        <end position="323"/>
    </location>
</feature>
<feature type="strand" evidence="10">
    <location>
        <begin position="326"/>
        <end position="331"/>
    </location>
</feature>
<feature type="turn" evidence="10">
    <location>
        <begin position="332"/>
        <end position="335"/>
    </location>
</feature>
<feature type="strand" evidence="10">
    <location>
        <begin position="336"/>
        <end position="341"/>
    </location>
</feature>
<feature type="strand" evidence="10">
    <location>
        <begin position="344"/>
        <end position="349"/>
    </location>
</feature>
<feature type="helix" evidence="10">
    <location>
        <begin position="356"/>
        <end position="358"/>
    </location>
</feature>
<feature type="strand" evidence="10">
    <location>
        <begin position="361"/>
        <end position="373"/>
    </location>
</feature>
<feature type="strand" evidence="10">
    <location>
        <begin position="383"/>
        <end position="388"/>
    </location>
</feature>
<feature type="strand" evidence="10">
    <location>
        <begin position="390"/>
        <end position="397"/>
    </location>
</feature>
<feature type="strand" evidence="10">
    <location>
        <begin position="399"/>
        <end position="407"/>
    </location>
</feature>
<feature type="strand" evidence="10">
    <location>
        <begin position="412"/>
        <end position="416"/>
    </location>
</feature>
<feature type="strand" evidence="10">
    <location>
        <begin position="424"/>
        <end position="435"/>
    </location>
</feature>
<feature type="strand" evidence="10">
    <location>
        <begin position="438"/>
        <end position="440"/>
    </location>
</feature>
<feature type="strand" evidence="10">
    <location>
        <begin position="443"/>
        <end position="447"/>
    </location>
</feature>
<feature type="strand" evidence="10">
    <location>
        <begin position="449"/>
        <end position="454"/>
    </location>
</feature>
<feature type="strand" evidence="10">
    <location>
        <begin position="460"/>
        <end position="462"/>
    </location>
</feature>
<feature type="strand" evidence="10">
    <location>
        <begin position="468"/>
        <end position="472"/>
    </location>
</feature>
<feature type="strand" evidence="10">
    <location>
        <begin position="478"/>
        <end position="483"/>
    </location>
</feature>
<feature type="helix" evidence="10">
    <location>
        <begin position="489"/>
        <end position="491"/>
    </location>
</feature>
<feature type="strand" evidence="10">
    <location>
        <begin position="492"/>
        <end position="494"/>
    </location>
</feature>
<feature type="strand" evidence="10">
    <location>
        <begin position="499"/>
        <end position="502"/>
    </location>
</feature>
<feature type="strand" evidence="10">
    <location>
        <begin position="508"/>
        <end position="511"/>
    </location>
</feature>
<feature type="strand" evidence="10">
    <location>
        <begin position="520"/>
        <end position="523"/>
    </location>
</feature>
<feature type="strand" evidence="10">
    <location>
        <begin position="526"/>
        <end position="528"/>
    </location>
</feature>
<feature type="strand" evidence="10">
    <location>
        <begin position="530"/>
        <end position="534"/>
    </location>
</feature>
<feature type="helix" evidence="10">
    <location>
        <begin position="541"/>
        <end position="543"/>
    </location>
</feature>
<feature type="strand" evidence="10">
    <location>
        <begin position="548"/>
        <end position="550"/>
    </location>
</feature>
<feature type="strand" evidence="10">
    <location>
        <begin position="563"/>
        <end position="566"/>
    </location>
</feature>
<feature type="turn" evidence="10">
    <location>
        <begin position="567"/>
        <end position="570"/>
    </location>
</feature>
<feature type="strand" evidence="10">
    <location>
        <begin position="571"/>
        <end position="575"/>
    </location>
</feature>
<feature type="strand" evidence="10">
    <location>
        <begin position="577"/>
        <end position="580"/>
    </location>
</feature>
<feature type="strand" evidence="10">
    <location>
        <begin position="590"/>
        <end position="596"/>
    </location>
</feature>
<feature type="helix" evidence="10">
    <location>
        <begin position="600"/>
        <end position="614"/>
    </location>
</feature>
<feature type="strand" evidence="10">
    <location>
        <begin position="619"/>
        <end position="621"/>
    </location>
</feature>
<feature type="strand" evidence="10">
    <location>
        <begin position="623"/>
        <end position="633"/>
    </location>
</feature>
<feature type="strand" evidence="10">
    <location>
        <begin position="637"/>
        <end position="639"/>
    </location>
</feature>
<feature type="strand" evidence="10">
    <location>
        <begin position="641"/>
        <end position="644"/>
    </location>
</feature>
<feature type="strand" evidence="10">
    <location>
        <begin position="654"/>
        <end position="664"/>
    </location>
</feature>
<feature type="strand" evidence="10">
    <location>
        <begin position="686"/>
        <end position="697"/>
    </location>
</feature>
<feature type="strand" evidence="10">
    <location>
        <begin position="699"/>
        <end position="702"/>
    </location>
</feature>
<feature type="strand" evidence="10">
    <location>
        <begin position="706"/>
        <end position="717"/>
    </location>
</feature>
<feature type="strand" evidence="10">
    <location>
        <begin position="719"/>
        <end position="723"/>
    </location>
</feature>
<feature type="strand" evidence="10">
    <location>
        <begin position="726"/>
        <end position="730"/>
    </location>
</feature>
<feature type="turn" evidence="10">
    <location>
        <begin position="731"/>
        <end position="735"/>
    </location>
</feature>
<feature type="strand" evidence="10">
    <location>
        <begin position="741"/>
        <end position="745"/>
    </location>
</feature>
<feature type="strand" evidence="10">
    <location>
        <begin position="756"/>
        <end position="766"/>
    </location>
</feature>
<feature type="strand" evidence="10">
    <location>
        <begin position="768"/>
        <end position="771"/>
    </location>
</feature>
<feature type="strand" evidence="10">
    <location>
        <begin position="773"/>
        <end position="783"/>
    </location>
</feature>
<feature type="strand" evidence="10">
    <location>
        <begin position="785"/>
        <end position="788"/>
    </location>
</feature>
<feature type="strand" evidence="10">
    <location>
        <begin position="791"/>
        <end position="803"/>
    </location>
</feature>
<feature type="strand" evidence="10">
    <location>
        <begin position="805"/>
        <end position="808"/>
    </location>
</feature>
<feature type="strand" evidence="10">
    <location>
        <begin position="813"/>
        <end position="818"/>
    </location>
</feature>
<feature type="strand" evidence="10">
    <location>
        <begin position="820"/>
        <end position="824"/>
    </location>
</feature>
<feature type="strand" evidence="10">
    <location>
        <begin position="826"/>
        <end position="828"/>
    </location>
</feature>
<feature type="strand" evidence="10">
    <location>
        <begin position="833"/>
        <end position="836"/>
    </location>
</feature>
<feature type="strand" evidence="10">
    <location>
        <begin position="842"/>
        <end position="844"/>
    </location>
</feature>
<feature type="strand" evidence="10">
    <location>
        <begin position="851"/>
        <end position="856"/>
    </location>
</feature>
<feature type="strand" evidence="10">
    <location>
        <begin position="858"/>
        <end position="860"/>
    </location>
</feature>
<feature type="strand" evidence="10">
    <location>
        <begin position="865"/>
        <end position="868"/>
    </location>
</feature>
<feature type="strand" evidence="10">
    <location>
        <begin position="870"/>
        <end position="875"/>
    </location>
</feature>
<feature type="strand" evidence="10">
    <location>
        <begin position="886"/>
        <end position="890"/>
    </location>
</feature>
<feature type="strand" evidence="10">
    <location>
        <begin position="893"/>
        <end position="895"/>
    </location>
</feature>
<feature type="helix" evidence="10">
    <location>
        <begin position="903"/>
        <end position="906"/>
    </location>
</feature>
<feature type="strand" evidence="10">
    <location>
        <begin position="911"/>
        <end position="915"/>
    </location>
</feature>
<feature type="strand" evidence="10">
    <location>
        <begin position="919"/>
        <end position="930"/>
    </location>
</feature>
<feature type="strand" evidence="10">
    <location>
        <begin position="932"/>
        <end position="934"/>
    </location>
</feature>
<feature type="strand" evidence="10">
    <location>
        <begin position="939"/>
        <end position="948"/>
    </location>
</feature>
<feature type="strand" evidence="10">
    <location>
        <begin position="950"/>
        <end position="952"/>
    </location>
</feature>
<feature type="strand" evidence="10">
    <location>
        <begin position="956"/>
        <end position="958"/>
    </location>
</feature>
<feature type="strand" evidence="10">
    <location>
        <begin position="961"/>
        <end position="971"/>
    </location>
</feature>
<feature type="strand" evidence="10">
    <location>
        <begin position="973"/>
        <end position="978"/>
    </location>
</feature>
<feature type="strand" evidence="10">
    <location>
        <begin position="985"/>
        <end position="993"/>
    </location>
</feature>
<feature type="strand" evidence="10">
    <location>
        <begin position="997"/>
        <end position="1005"/>
    </location>
</feature>
<feature type="strand" evidence="10">
    <location>
        <begin position="1013"/>
        <end position="1019"/>
    </location>
</feature>
<feature type="strand" evidence="10">
    <location>
        <begin position="1026"/>
        <end position="1029"/>
    </location>
</feature>
<feature type="strand" evidence="10">
    <location>
        <begin position="1032"/>
        <end position="1034"/>
    </location>
</feature>
<feature type="strand" evidence="10">
    <location>
        <begin position="1037"/>
        <end position="1046"/>
    </location>
</feature>
<feature type="strand" evidence="10">
    <location>
        <begin position="1049"/>
        <end position="1061"/>
    </location>
</feature>
<evidence type="ECO:0000250" key="1"/>
<evidence type="ECO:0000250" key="2">
    <source>
        <dbReference type="UniProtKB" id="Q7BCK4"/>
    </source>
</evidence>
<evidence type="ECO:0000255" key="3"/>
<evidence type="ECO:0000255" key="4">
    <source>
        <dbReference type="PROSITE-ProRule" id="PRU00556"/>
    </source>
</evidence>
<evidence type="ECO:0000255" key="5">
    <source>
        <dbReference type="PROSITE-ProRule" id="PRU01028"/>
    </source>
</evidence>
<evidence type="ECO:0000269" key="6">
    <source>
    </source>
</evidence>
<evidence type="ECO:0000269" key="7">
    <source>
    </source>
</evidence>
<evidence type="ECO:0000269" key="8">
    <source>
    </source>
</evidence>
<evidence type="ECO:0000305" key="9"/>
<evidence type="ECO:0007829" key="10">
    <source>
        <dbReference type="PDB" id="5J44"/>
    </source>
</evidence>
<proteinExistence type="evidence at protein level"/>
<reference key="1">
    <citation type="journal article" date="1995" name="Mol. Microbiol.">
        <title>SepA, the major extracellular protein of Shigella flexneri: autonomous secretion and involvement in tissue invasion.</title>
        <authorList>
            <person name="Benjelloun-Touimi Z."/>
            <person name="Sansonetti P.J."/>
            <person name="Parsot C."/>
        </authorList>
    </citation>
    <scope>NUCLEOTIDE SEQUENCE [GENOMIC DNA]</scope>
    <scope>PROTEIN SEQUENCE OF 57-72; 541-555 AND 1054-1066</scope>
    <source>
        <strain>M90T / Serotype 5a</strain>
        <plasmid>pWR100</plasmid>
    </source>
</reference>
<reference key="2">
    <citation type="journal article" date="2000" name="Mol. Microbiol.">
        <title>The virulence plasmid pWR100 and the repertoire of proteins secreted by the type III secretion apparatus of Shigella flexneri.</title>
        <authorList>
            <person name="Buchrieser C."/>
            <person name="Glaser P."/>
            <person name="Rusniok C."/>
            <person name="Nedjari H."/>
            <person name="d'Hauteville H."/>
            <person name="Kunst F."/>
            <person name="Sansonetti P.J."/>
            <person name="Parsot C."/>
        </authorList>
    </citation>
    <scope>NUCLEOTIDE SEQUENCE [GENOMIC DNA]</scope>
    <source>
        <strain>M90T / Serotype 5a</strain>
        <plasmid>pWR100</plasmid>
    </source>
</reference>
<reference key="3">
    <citation type="journal article" date="2001" name="Infect. Immun.">
        <title>Complete DNA sequence and analysis of the large virulence plasmid of Shigella flexneri.</title>
        <authorList>
            <person name="Venkatesan M.M."/>
            <person name="Goldberg M.B."/>
            <person name="Rose D.J."/>
            <person name="Grotbeck E.J."/>
            <person name="Burland V."/>
            <person name="Blattner F.R."/>
        </authorList>
    </citation>
    <scope>NUCLEOTIDE SEQUENCE [GENOMIC DNA]</scope>
    <source>
        <strain>M90T / Serotype 5a</strain>
        <plasmid>pWR501</plasmid>
    </source>
</reference>
<reference key="4">
    <citation type="journal article" date="2002" name="Nucleic Acids Res.">
        <title>Genome sequence of Shigella flexneri 2a: insights into pathogenicity through comparison with genomes of Escherichia coli K12 and O157.</title>
        <authorList>
            <person name="Jin Q."/>
            <person name="Yuan Z."/>
            <person name="Xu J."/>
            <person name="Wang Y."/>
            <person name="Shen Y."/>
            <person name="Lu W."/>
            <person name="Wang J."/>
            <person name="Liu H."/>
            <person name="Yang J."/>
            <person name="Yang F."/>
            <person name="Zhang X."/>
            <person name="Zhang J."/>
            <person name="Yang G."/>
            <person name="Wu H."/>
            <person name="Qu D."/>
            <person name="Dong J."/>
            <person name="Sun L."/>
            <person name="Xue Y."/>
            <person name="Zhao A."/>
            <person name="Gao Y."/>
            <person name="Zhu J."/>
            <person name="Kan B."/>
            <person name="Ding K."/>
            <person name="Chen S."/>
            <person name="Cheng H."/>
            <person name="Yao Z."/>
            <person name="He B."/>
            <person name="Chen R."/>
            <person name="Ma D."/>
            <person name="Qiang B."/>
            <person name="Wen Y."/>
            <person name="Hou Y."/>
            <person name="Yu J."/>
        </authorList>
    </citation>
    <scope>NUCLEOTIDE SEQUENCE [LARGE SCALE GENOMIC DNA]</scope>
    <source>
        <strain>301 / Serotype 2a</strain>
        <plasmid>pCP301</plasmid>
    </source>
</reference>
<reference key="5">
    <citation type="journal article" date="1998" name="Microbiology">
        <title>SepA, the 110 kDa protein secreted by Shigella flexneri: two-domain structure and proteolytic activity.</title>
        <authorList>
            <person name="Benjelloun-Touimi Z."/>
            <person name="Si Tahar M."/>
            <person name="Montecucco C."/>
            <person name="Sansonetti P.J."/>
            <person name="Parsot C."/>
        </authorList>
    </citation>
    <scope>FUNCTION</scope>
    <scope>ACTIVITY REGULATION</scope>
    <scope>DISRUPTION PHENOTYPE</scope>
    <source>
        <strain>M90T / Serotype 5a</strain>
        <plasmid>pWR100</plasmid>
    </source>
</reference>
<reference key="6">
    <citation type="journal article" date="2006" name="J. Bacteriol.">
        <title>Polar localization of the autotransporter family of large bacterial virulence proteins.</title>
        <authorList>
            <person name="Jain S."/>
            <person name="van Ulsen P."/>
            <person name="Benz I."/>
            <person name="Schmidt M.A."/>
            <person name="Fernandez R."/>
            <person name="Tommassen J."/>
            <person name="Goldberg M.B."/>
        </authorList>
    </citation>
    <scope>SUBCELLULAR LOCATION</scope>
    <scope>POLAR TARGETING</scope>
    <source>
        <strain>ATCC 700930 / 2457T / Serotype 2a</strain>
    </source>
</reference>
<geneLocation type="plasmid">
    <name>pWR100</name>
</geneLocation>
<geneLocation type="plasmid">
    <name>pWR501</name>
</geneLocation>
<geneLocation type="plasmid">
    <name>pCP301</name>
</geneLocation>
<accession>Q8VSL2</accession>
<accession>Q54165</accession>
<accession>Q99QC6</accession>